<comment type="catalytic activity">
    <reaction>
        <text>1-(5-phospho-beta-D-ribosyl)-5-[(5-phospho-beta-D-ribosylamino)methylideneamino]imidazole-4-carboxamide = 5-[(5-phospho-1-deoxy-D-ribulos-1-ylimino)methylamino]-1-(5-phospho-beta-D-ribosyl)imidazole-4-carboxamide</text>
        <dbReference type="Rhea" id="RHEA:15469"/>
        <dbReference type="ChEBI" id="CHEBI:58435"/>
        <dbReference type="ChEBI" id="CHEBI:58525"/>
        <dbReference type="EC" id="5.3.1.16"/>
    </reaction>
</comment>
<comment type="pathway">
    <text>Amino-acid biosynthesis; L-histidine biosynthesis; L-histidine from 5-phospho-alpha-D-ribose 1-diphosphate: step 4/9.</text>
</comment>
<comment type="subcellular location">
    <subcellularLocation>
        <location evidence="1">Cytoplasm</location>
    </subcellularLocation>
</comment>
<comment type="similarity">
    <text evidence="2">Belongs to the HisA/HisF family.</text>
</comment>
<reference key="1">
    <citation type="journal article" date="2000" name="Curr. Microbiol.">
        <title>Organization and sequence of histidine biosynthesis genes hisH, -A, -F, and -IE in Thermoanaerobacter ethanolicus.</title>
        <authorList>
            <person name="Erbeznik M."/>
            <person name="Strobel H.J."/>
            <person name="Dawson K.A."/>
        </authorList>
    </citation>
    <scope>NUCLEOTIDE SEQUENCE [GENOMIC DNA]</scope>
</reference>
<name>HIS4_THEP3</name>
<feature type="chain" id="PRO_0000142067" description="1-(5-phosphoribosyl)-5-[(5-phosphoribosylamino)methylideneamino] imidazole-4-carboxamide isomerase">
    <location>
        <begin position="1"/>
        <end position="237"/>
    </location>
</feature>
<feature type="active site" description="Proton acceptor" evidence="1">
    <location>
        <position position="8"/>
    </location>
</feature>
<feature type="active site" description="Proton donor" evidence="1">
    <location>
        <position position="129"/>
    </location>
</feature>
<dbReference type="EC" id="5.3.1.16"/>
<dbReference type="EMBL" id="AF150930">
    <property type="protein sequence ID" value="AAF05093.1"/>
    <property type="molecule type" value="Genomic_DNA"/>
</dbReference>
<dbReference type="SMR" id="Q9RPQ5"/>
<dbReference type="UniPathway" id="UPA00031">
    <property type="reaction ID" value="UER00009"/>
</dbReference>
<dbReference type="GO" id="GO:0005737">
    <property type="term" value="C:cytoplasm"/>
    <property type="evidence" value="ECO:0007669"/>
    <property type="project" value="UniProtKB-SubCell"/>
</dbReference>
<dbReference type="GO" id="GO:0003949">
    <property type="term" value="F:1-(5-phosphoribosyl)-5-[(5-phosphoribosylamino)methylideneamino]imidazole-4-carboxamide isomerase activity"/>
    <property type="evidence" value="ECO:0007669"/>
    <property type="project" value="UniProtKB-UniRule"/>
</dbReference>
<dbReference type="GO" id="GO:0000105">
    <property type="term" value="P:L-histidine biosynthetic process"/>
    <property type="evidence" value="ECO:0007669"/>
    <property type="project" value="UniProtKB-UniRule"/>
</dbReference>
<dbReference type="GO" id="GO:0000162">
    <property type="term" value="P:L-tryptophan biosynthetic process"/>
    <property type="evidence" value="ECO:0007669"/>
    <property type="project" value="TreeGrafter"/>
</dbReference>
<dbReference type="CDD" id="cd04732">
    <property type="entry name" value="HisA"/>
    <property type="match status" value="1"/>
</dbReference>
<dbReference type="FunFam" id="3.20.20.70:FF:000009">
    <property type="entry name" value="1-(5-phosphoribosyl)-5-[(5-phosphoribosylamino)methylideneamino] imidazole-4-carboxamide isomerase"/>
    <property type="match status" value="1"/>
</dbReference>
<dbReference type="Gene3D" id="3.20.20.70">
    <property type="entry name" value="Aldolase class I"/>
    <property type="match status" value="1"/>
</dbReference>
<dbReference type="HAMAP" id="MF_01014">
    <property type="entry name" value="HisA"/>
    <property type="match status" value="1"/>
</dbReference>
<dbReference type="InterPro" id="IPR013785">
    <property type="entry name" value="Aldolase_TIM"/>
</dbReference>
<dbReference type="InterPro" id="IPR006062">
    <property type="entry name" value="His_biosynth"/>
</dbReference>
<dbReference type="InterPro" id="IPR006063">
    <property type="entry name" value="HisA_bact_arch"/>
</dbReference>
<dbReference type="InterPro" id="IPR044524">
    <property type="entry name" value="Isoase_HisA-like"/>
</dbReference>
<dbReference type="InterPro" id="IPR023016">
    <property type="entry name" value="Isoase_HisA-like_bact"/>
</dbReference>
<dbReference type="InterPro" id="IPR011060">
    <property type="entry name" value="RibuloseP-bd_barrel"/>
</dbReference>
<dbReference type="NCBIfam" id="TIGR00007">
    <property type="entry name" value="1-(5-phosphoribosyl)-5-[(5-phosphoribosylamino)methylideneamino]imidazole-4-carboxamide isomerase"/>
    <property type="match status" value="1"/>
</dbReference>
<dbReference type="NCBIfam" id="NF010112">
    <property type="entry name" value="PRK13585.1"/>
    <property type="match status" value="1"/>
</dbReference>
<dbReference type="PANTHER" id="PTHR43090">
    <property type="entry name" value="1-(5-PHOSPHORIBOSYL)-5-[(5-PHOSPHORIBOSYLAMINO)METHYLIDENEAMINO] IMIDAZOLE-4-CARBOXAMIDE ISOMERASE"/>
    <property type="match status" value="1"/>
</dbReference>
<dbReference type="PANTHER" id="PTHR43090:SF2">
    <property type="entry name" value="1-(5-PHOSPHORIBOSYL)-5-[(5-PHOSPHORIBOSYLAMINO)METHYLIDENEAMINO] IMIDAZOLE-4-CARBOXAMIDE ISOMERASE"/>
    <property type="match status" value="1"/>
</dbReference>
<dbReference type="Pfam" id="PF00977">
    <property type="entry name" value="His_biosynth"/>
    <property type="match status" value="1"/>
</dbReference>
<dbReference type="SUPFAM" id="SSF51366">
    <property type="entry name" value="Ribulose-phoshate binding barrel"/>
    <property type="match status" value="1"/>
</dbReference>
<organism>
    <name type="scientific">Thermoanaerobacter pseudethanolicus (strain ATCC 33223 / 39E)</name>
    <name type="common">Clostridium thermohydrosulfuricum</name>
    <dbReference type="NCBI Taxonomy" id="340099"/>
    <lineage>
        <taxon>Bacteria</taxon>
        <taxon>Bacillati</taxon>
        <taxon>Bacillota</taxon>
        <taxon>Clostridia</taxon>
        <taxon>Thermoanaerobacterales</taxon>
        <taxon>Thermoanaerobacteraceae</taxon>
        <taxon>Thermoanaerobacter</taxon>
    </lineage>
</organism>
<gene>
    <name type="primary">hisA</name>
</gene>
<accession>Q9RPQ5</accession>
<sequence length="237" mass="25700">MIIYPAVDIKDGRCVRLVQGEFDKVTVYSDNPVEMGLKWERMGAQYLHVVDLDGARTGQIQNTPIISEMAVKLGIPVQLGGGIRTVETIETLLCKGIHRVILGTSAVKNPELVKQALKTFEDSVVIGIDAKDGMVAIEGWAKTSEFTAIRFAKKMEELGAKTIIYTDISRDGMLAGPNLKAMEEMVKAVNIEVIASGGVRNIDDIRNLKNVGVSGVIVGKALYTGDLDLKEAIEVAK</sequence>
<evidence type="ECO:0000250" key="1"/>
<evidence type="ECO:0000305" key="2"/>
<proteinExistence type="inferred from homology"/>
<protein>
    <recommendedName>
        <fullName>1-(5-phosphoribosyl)-5-[(5-phosphoribosylamino)methylideneamino] imidazole-4-carboxamide isomerase</fullName>
        <ecNumber>5.3.1.16</ecNumber>
    </recommendedName>
    <alternativeName>
        <fullName>Phosphoribosylformimino-5-aminoimidazole carboxamide ribotide isomerase</fullName>
    </alternativeName>
</protein>
<keyword id="KW-0028">Amino-acid biosynthesis</keyword>
<keyword id="KW-0963">Cytoplasm</keyword>
<keyword id="KW-0368">Histidine biosynthesis</keyword>
<keyword id="KW-0413">Isomerase</keyword>